<sequence length="309" mass="34473">MRIFFASSDGIALEVLKKISDQYDVVGVLTAPDKPSGRGLSLKVNDIKREALSRKITVLQPVVLDADVINLVKSLEPELMLVFSYGKIFKQEFLDIFPVGCINIHPSLLPKYRGPSPIQTVILNGDSVSGITVQKMTLEMDSGNILAQSQFEIKSFNTSVDIFEYVSLNSFDLVIEALNKLLKGDIGIVQDKNNATYCSFLGKEHRTIDFKLSAFDIKNKINAYNPWPLARARLDNNEIIFYRADFISTNDYDDQVIGKIIAFDPSKGLLVKTGDGILVVLELQRIGKKVLDCVSFYHGNRDLIGKVFS</sequence>
<proteinExistence type="inferred from homology"/>
<name>FMT_BORRA</name>
<evidence type="ECO:0000255" key="1">
    <source>
        <dbReference type="HAMAP-Rule" id="MF_00182"/>
    </source>
</evidence>
<protein>
    <recommendedName>
        <fullName evidence="1">Methionyl-tRNA formyltransferase</fullName>
        <ecNumber evidence="1">2.1.2.9</ecNumber>
    </recommendedName>
</protein>
<feature type="chain" id="PRO_1000098381" description="Methionyl-tRNA formyltransferase">
    <location>
        <begin position="1"/>
        <end position="309"/>
    </location>
</feature>
<feature type="binding site" evidence="1">
    <location>
        <begin position="107"/>
        <end position="110"/>
    </location>
    <ligand>
        <name>(6S)-5,6,7,8-tetrahydrofolate</name>
        <dbReference type="ChEBI" id="CHEBI:57453"/>
    </ligand>
</feature>
<accession>B5RQP3</accession>
<gene>
    <name evidence="1" type="primary">fmt</name>
    <name type="ordered locus">BRE_67</name>
</gene>
<dbReference type="EC" id="2.1.2.9" evidence="1"/>
<dbReference type="EMBL" id="CP000993">
    <property type="protein sequence ID" value="ACH94327.1"/>
    <property type="molecule type" value="Genomic_DNA"/>
</dbReference>
<dbReference type="RefSeq" id="WP_012538632.1">
    <property type="nucleotide sequence ID" value="NC_011244.1"/>
</dbReference>
<dbReference type="SMR" id="B5RQP3"/>
<dbReference type="KEGG" id="bre:BRE_67"/>
<dbReference type="HOGENOM" id="CLU_033347_1_1_12"/>
<dbReference type="Proteomes" id="UP000000612">
    <property type="component" value="Chromosome"/>
</dbReference>
<dbReference type="GO" id="GO:0005829">
    <property type="term" value="C:cytosol"/>
    <property type="evidence" value="ECO:0007669"/>
    <property type="project" value="TreeGrafter"/>
</dbReference>
<dbReference type="GO" id="GO:0004479">
    <property type="term" value="F:methionyl-tRNA formyltransferase activity"/>
    <property type="evidence" value="ECO:0007669"/>
    <property type="project" value="UniProtKB-UniRule"/>
</dbReference>
<dbReference type="CDD" id="cd08646">
    <property type="entry name" value="FMT_core_Met-tRNA-FMT_N"/>
    <property type="match status" value="1"/>
</dbReference>
<dbReference type="CDD" id="cd08704">
    <property type="entry name" value="Met_tRNA_FMT_C"/>
    <property type="match status" value="1"/>
</dbReference>
<dbReference type="Gene3D" id="3.10.25.10">
    <property type="entry name" value="Formyl transferase, C-terminal domain"/>
    <property type="match status" value="1"/>
</dbReference>
<dbReference type="Gene3D" id="3.40.50.170">
    <property type="entry name" value="Formyl transferase, N-terminal domain"/>
    <property type="match status" value="1"/>
</dbReference>
<dbReference type="HAMAP" id="MF_00182">
    <property type="entry name" value="Formyl_trans"/>
    <property type="match status" value="1"/>
</dbReference>
<dbReference type="InterPro" id="IPR005794">
    <property type="entry name" value="Fmt"/>
</dbReference>
<dbReference type="InterPro" id="IPR005793">
    <property type="entry name" value="Formyl_trans_C"/>
</dbReference>
<dbReference type="InterPro" id="IPR037022">
    <property type="entry name" value="Formyl_trans_C_sf"/>
</dbReference>
<dbReference type="InterPro" id="IPR002376">
    <property type="entry name" value="Formyl_transf_N"/>
</dbReference>
<dbReference type="InterPro" id="IPR036477">
    <property type="entry name" value="Formyl_transf_N_sf"/>
</dbReference>
<dbReference type="InterPro" id="IPR011034">
    <property type="entry name" value="Formyl_transferase-like_C_sf"/>
</dbReference>
<dbReference type="InterPro" id="IPR044135">
    <property type="entry name" value="Met-tRNA-FMT_C"/>
</dbReference>
<dbReference type="InterPro" id="IPR041711">
    <property type="entry name" value="Met-tRNA-FMT_N"/>
</dbReference>
<dbReference type="NCBIfam" id="TIGR00460">
    <property type="entry name" value="fmt"/>
    <property type="match status" value="1"/>
</dbReference>
<dbReference type="PANTHER" id="PTHR11138">
    <property type="entry name" value="METHIONYL-TRNA FORMYLTRANSFERASE"/>
    <property type="match status" value="1"/>
</dbReference>
<dbReference type="PANTHER" id="PTHR11138:SF5">
    <property type="entry name" value="METHIONYL-TRNA FORMYLTRANSFERASE, MITOCHONDRIAL"/>
    <property type="match status" value="1"/>
</dbReference>
<dbReference type="Pfam" id="PF02911">
    <property type="entry name" value="Formyl_trans_C"/>
    <property type="match status" value="1"/>
</dbReference>
<dbReference type="Pfam" id="PF00551">
    <property type="entry name" value="Formyl_trans_N"/>
    <property type="match status" value="1"/>
</dbReference>
<dbReference type="SUPFAM" id="SSF50486">
    <property type="entry name" value="FMT C-terminal domain-like"/>
    <property type="match status" value="1"/>
</dbReference>
<dbReference type="SUPFAM" id="SSF53328">
    <property type="entry name" value="Formyltransferase"/>
    <property type="match status" value="1"/>
</dbReference>
<comment type="function">
    <text evidence="1">Attaches a formyl group to the free amino group of methionyl-tRNA(fMet). The formyl group appears to play a dual role in the initiator identity of N-formylmethionyl-tRNA by promoting its recognition by IF2 and preventing the misappropriation of this tRNA by the elongation apparatus.</text>
</comment>
<comment type="catalytic activity">
    <reaction evidence="1">
        <text>L-methionyl-tRNA(fMet) + (6R)-10-formyltetrahydrofolate = N-formyl-L-methionyl-tRNA(fMet) + (6S)-5,6,7,8-tetrahydrofolate + H(+)</text>
        <dbReference type="Rhea" id="RHEA:24380"/>
        <dbReference type="Rhea" id="RHEA-COMP:9952"/>
        <dbReference type="Rhea" id="RHEA-COMP:9953"/>
        <dbReference type="ChEBI" id="CHEBI:15378"/>
        <dbReference type="ChEBI" id="CHEBI:57453"/>
        <dbReference type="ChEBI" id="CHEBI:78530"/>
        <dbReference type="ChEBI" id="CHEBI:78844"/>
        <dbReference type="ChEBI" id="CHEBI:195366"/>
        <dbReference type="EC" id="2.1.2.9"/>
    </reaction>
</comment>
<comment type="similarity">
    <text evidence="1">Belongs to the Fmt family.</text>
</comment>
<organism>
    <name type="scientific">Borrelia recurrentis (strain A1)</name>
    <dbReference type="NCBI Taxonomy" id="412418"/>
    <lineage>
        <taxon>Bacteria</taxon>
        <taxon>Pseudomonadati</taxon>
        <taxon>Spirochaetota</taxon>
        <taxon>Spirochaetia</taxon>
        <taxon>Spirochaetales</taxon>
        <taxon>Borreliaceae</taxon>
        <taxon>Borrelia</taxon>
    </lineage>
</organism>
<reference key="1">
    <citation type="journal article" date="2008" name="PLoS Genet.">
        <title>The genome of Borrelia recurrentis, the agent of deadly louse-borne relapsing fever, is a degraded subset of tick-borne Borrelia duttonii.</title>
        <authorList>
            <person name="Lescot M."/>
            <person name="Audic S."/>
            <person name="Robert C."/>
            <person name="Nguyen T.T."/>
            <person name="Blanc G."/>
            <person name="Cutler S.J."/>
            <person name="Wincker P."/>
            <person name="Couloux A."/>
            <person name="Claverie J.-M."/>
            <person name="Raoult D."/>
            <person name="Drancourt M."/>
        </authorList>
    </citation>
    <scope>NUCLEOTIDE SEQUENCE [LARGE SCALE GENOMIC DNA]</scope>
    <source>
        <strain>A1</strain>
    </source>
</reference>
<keyword id="KW-0648">Protein biosynthesis</keyword>
<keyword id="KW-0808">Transferase</keyword>